<reference key="1">
    <citation type="journal article" date="1996" name="Science">
        <title>Complete genome sequence of the methanogenic archaeon, Methanococcus jannaschii.</title>
        <authorList>
            <person name="Bult C.J."/>
            <person name="White O."/>
            <person name="Olsen G.J."/>
            <person name="Zhou L."/>
            <person name="Fleischmann R.D."/>
            <person name="Sutton G.G."/>
            <person name="Blake J.A."/>
            <person name="FitzGerald L.M."/>
            <person name="Clayton R.A."/>
            <person name="Gocayne J.D."/>
            <person name="Kerlavage A.R."/>
            <person name="Dougherty B.A."/>
            <person name="Tomb J.-F."/>
            <person name="Adams M.D."/>
            <person name="Reich C.I."/>
            <person name="Overbeek R."/>
            <person name="Kirkness E.F."/>
            <person name="Weinstock K.G."/>
            <person name="Merrick J.M."/>
            <person name="Glodek A."/>
            <person name="Scott J.L."/>
            <person name="Geoghagen N.S.M."/>
            <person name="Weidman J.F."/>
            <person name="Fuhrmann J.L."/>
            <person name="Nguyen D."/>
            <person name="Utterback T.R."/>
            <person name="Kelley J.M."/>
            <person name="Peterson J.D."/>
            <person name="Sadow P.W."/>
            <person name="Hanna M.C."/>
            <person name="Cotton M.D."/>
            <person name="Roberts K.M."/>
            <person name="Hurst M.A."/>
            <person name="Kaine B.P."/>
            <person name="Borodovsky M."/>
            <person name="Klenk H.-P."/>
            <person name="Fraser C.M."/>
            <person name="Smith H.O."/>
            <person name="Woese C.R."/>
            <person name="Venter J.C."/>
        </authorList>
    </citation>
    <scope>NUCLEOTIDE SEQUENCE [LARGE SCALE GENOMIC DNA]</scope>
    <source>
        <strain>ATCC 43067 / DSM 2661 / JAL-1 / JCM 10045 / NBRC 100440</strain>
    </source>
</reference>
<evidence type="ECO:0000255" key="1">
    <source>
        <dbReference type="PROSITE-ProRule" id="PRU00543"/>
    </source>
</evidence>
<organism>
    <name type="scientific">Methanocaldococcus jannaschii (strain ATCC 43067 / DSM 2661 / JAL-1 / JCM 10045 / NBRC 100440)</name>
    <name type="common">Methanococcus jannaschii</name>
    <dbReference type="NCBI Taxonomy" id="243232"/>
    <lineage>
        <taxon>Archaea</taxon>
        <taxon>Methanobacteriati</taxon>
        <taxon>Methanobacteriota</taxon>
        <taxon>Methanomada group</taxon>
        <taxon>Methanococci</taxon>
        <taxon>Methanococcales</taxon>
        <taxon>Methanocaldococcaceae</taxon>
        <taxon>Methanocaldococcus</taxon>
    </lineage>
</organism>
<feature type="chain" id="PRO_0000107448" description="Uncharacterized protein MJ1633">
    <location>
        <begin position="1"/>
        <end position="478"/>
    </location>
</feature>
<feature type="domain" description="RCK N-terminal" evidence="1">
    <location>
        <begin position="2"/>
        <end position="120"/>
    </location>
</feature>
<protein>
    <recommendedName>
        <fullName>Uncharacterized protein MJ1633</fullName>
    </recommendedName>
</protein>
<gene>
    <name type="ordered locus">MJ1633</name>
</gene>
<keyword id="KW-1185">Reference proteome</keyword>
<proteinExistence type="predicted"/>
<dbReference type="EMBL" id="L77117">
    <property type="protein sequence ID" value="AAB99654.1"/>
    <property type="molecule type" value="Genomic_DNA"/>
</dbReference>
<dbReference type="PIR" id="G64503">
    <property type="entry name" value="G64503"/>
</dbReference>
<dbReference type="SMR" id="Q59027"/>
<dbReference type="STRING" id="243232.MJ_1633"/>
<dbReference type="PaxDb" id="243232-MJ_1633"/>
<dbReference type="EnsemblBacteria" id="AAB99654">
    <property type="protein sequence ID" value="AAB99654"/>
    <property type="gene ID" value="MJ_1633"/>
</dbReference>
<dbReference type="KEGG" id="mja:MJ_1633"/>
<dbReference type="eggNOG" id="arCOG01566">
    <property type="taxonomic scope" value="Archaea"/>
</dbReference>
<dbReference type="HOGENOM" id="CLU_046377_1_1_2"/>
<dbReference type="InParanoid" id="Q59027"/>
<dbReference type="PhylomeDB" id="Q59027"/>
<dbReference type="Proteomes" id="UP000000805">
    <property type="component" value="Chromosome"/>
</dbReference>
<dbReference type="GO" id="GO:0003676">
    <property type="term" value="F:nucleic acid binding"/>
    <property type="evidence" value="ECO:0007669"/>
    <property type="project" value="InterPro"/>
</dbReference>
<dbReference type="GO" id="GO:0006813">
    <property type="term" value="P:potassium ion transport"/>
    <property type="evidence" value="ECO:0007669"/>
    <property type="project" value="InterPro"/>
</dbReference>
<dbReference type="Gene3D" id="3.10.310.30">
    <property type="match status" value="1"/>
</dbReference>
<dbReference type="Gene3D" id="3.90.1640.10">
    <property type="entry name" value="inorganic pyrophosphatase (n-terminal core)"/>
    <property type="match status" value="1"/>
</dbReference>
<dbReference type="Gene3D" id="3.40.50.720">
    <property type="entry name" value="NAD(P)-binding Rossmann-like Domain"/>
    <property type="match status" value="1"/>
</dbReference>
<dbReference type="InterPro" id="IPR001667">
    <property type="entry name" value="DDH_dom"/>
</dbReference>
<dbReference type="InterPro" id="IPR038763">
    <property type="entry name" value="DHH_sf"/>
</dbReference>
<dbReference type="InterPro" id="IPR003156">
    <property type="entry name" value="DHHA1_dom"/>
</dbReference>
<dbReference type="InterPro" id="IPR036291">
    <property type="entry name" value="NAD(P)-bd_dom_sf"/>
</dbReference>
<dbReference type="InterPro" id="IPR051319">
    <property type="entry name" value="Oligoribo/pAp-PDE_c-di-AMP_PDE"/>
</dbReference>
<dbReference type="InterPro" id="IPR003148">
    <property type="entry name" value="RCK_N"/>
</dbReference>
<dbReference type="PANTHER" id="PTHR47618">
    <property type="entry name" value="BIFUNCTIONAL OLIGORIBONUCLEASE AND PAP PHOSPHATASE NRNA"/>
    <property type="match status" value="1"/>
</dbReference>
<dbReference type="PANTHER" id="PTHR47618:SF1">
    <property type="entry name" value="BIFUNCTIONAL OLIGORIBONUCLEASE AND PAP PHOSPHATASE NRNA"/>
    <property type="match status" value="1"/>
</dbReference>
<dbReference type="Pfam" id="PF01368">
    <property type="entry name" value="DHH"/>
    <property type="match status" value="1"/>
</dbReference>
<dbReference type="Pfam" id="PF02272">
    <property type="entry name" value="DHHA1"/>
    <property type="match status" value="1"/>
</dbReference>
<dbReference type="Pfam" id="PF02254">
    <property type="entry name" value="TrkA_N"/>
    <property type="match status" value="1"/>
</dbReference>
<dbReference type="SUPFAM" id="SSF64182">
    <property type="entry name" value="DHH phosphoesterases"/>
    <property type="match status" value="1"/>
</dbReference>
<dbReference type="SUPFAM" id="SSF51735">
    <property type="entry name" value="NAD(P)-binding Rossmann-fold domains"/>
    <property type="match status" value="1"/>
</dbReference>
<dbReference type="PROSITE" id="PS51201">
    <property type="entry name" value="RCK_N"/>
    <property type="match status" value="1"/>
</dbReference>
<sequence>MMNMITVIGFGSFGRKVVNFIKNKEPITIIDKNIDDADDLVKEGVTVIVGDATQDEVLKKAKIENADIVLILTNEPEVNRRIAERVCELSPNSYKIARAIPRYPELYMGLNIDKIINILESGAKDIAKEVEDAKLKRKLMQLKSVLIEGKKRCMKLEKTEEEKKAPLLILTHINPDPDAIASAMALKTLAERWGVDSDIAYGGNIGYDENKAMINLLGIKLLNVEDIDLDNYCVIAVIDTSTSKQLPIELPNIDIIIDHHNNTDLTAKYMDVRPEVGATASILTQYLMELDIEPSRNLATALFYGIQSDTDYFKRETSKLDFEAAAYLQSYIDASILNMIENPEISTEVMEVLAKAVMNRRVVKGNIALAYVGEISNRDALPKAADFLLKMEGISTTFVFGIVGDEIHISARTKDLRLNLGEILNKAFGGGGHQTAAAAKIPLGIFKAVSDKEALRKLVEEAIRAKILEVIGIKEEEK</sequence>
<accession>Q59027</accession>
<name>Y1633_METJA</name>